<keyword id="KW-0117">Actin capping</keyword>
<keyword id="KW-0009">Actin-binding</keyword>
<keyword id="KW-0963">Cytoplasm</keyword>
<keyword id="KW-0206">Cytoskeleton</keyword>
<keyword id="KW-0597">Phosphoprotein</keyword>
<keyword id="KW-1185">Reference proteome</keyword>
<comment type="function">
    <text>F-actin-capping proteins bind in a Ca(2+)-independent manner to the fast growing ends of actin filaments (barbed end) thereby blocking the exchange of subunits at these ends. Unlike other capping proteins (such as gelsolin and severin), these proteins do not sever actin filaments. May play a role in the morphogenesis of spermatid.</text>
</comment>
<comment type="subunit">
    <text evidence="1">Component of the F-actin capping complex, composed of a heterodimer of an alpha and a beta subunit. Component of the WASH complex, composed of F-actin-capping protein subunit alpha (CAPZA1, CAPZA2 or CAPZA3), F-actin-capping protein subunit beta (CAPZB), WASHC1, WASHC2, WASHC3, WASHC4 and WASHC5 (By similarity).</text>
</comment>
<comment type="subcellular location">
    <subcellularLocation>
        <location evidence="2">Cytoplasm</location>
        <location evidence="2">Cytoskeleton</location>
    </subcellularLocation>
</comment>
<comment type="tissue specificity">
    <text>Exclusively expressed in the testis.</text>
</comment>
<comment type="developmental stage">
    <text>Expressed in 24-day-old and adult testis, but not in 4-, 10- and 16-day-old testis.</text>
</comment>
<comment type="similarity">
    <text evidence="4">Belongs to the F-actin-capping protein alpha subunit family.</text>
</comment>
<name>CAZA3_MOUSE</name>
<reference key="1">
    <citation type="journal article" date="1994" name="FEBS Lett.">
        <title>Isolation and characterization of cDNA clones specifically expressed in testicular germ cells.</title>
        <authorList>
            <person name="Tanaka H."/>
            <person name="Yoshimura Y."/>
            <person name="Nishina Y."/>
            <person name="Nozaki M."/>
            <person name="Nojima H."/>
            <person name="Nishimune Y."/>
        </authorList>
    </citation>
    <scope>NUCLEOTIDE SEQUENCE [MRNA]</scope>
    <source>
        <strain>C57BL/6J</strain>
        <tissue>Testis</tissue>
    </source>
</reference>
<reference key="2">
    <citation type="journal article" date="1999" name="Gene">
        <title>Genomic analysis of male germ cell-specific actin capping protein alpha.</title>
        <authorList>
            <person name="Yoshimura Y."/>
            <person name="Tanaka H."/>
            <person name="Nozaki M."/>
            <person name="Yomogida K."/>
            <person name="Shimamura K."/>
            <person name="Yasunaga T."/>
            <person name="Nishimune Y."/>
        </authorList>
    </citation>
    <scope>NUCLEOTIDE SEQUENCE [GENOMIC DNA]</scope>
    <source>
        <strain>129/Sv</strain>
    </source>
</reference>
<reference key="3">
    <citation type="journal article" date="2005" name="Science">
        <title>The transcriptional landscape of the mammalian genome.</title>
        <authorList>
            <person name="Carninci P."/>
            <person name="Kasukawa T."/>
            <person name="Katayama S."/>
            <person name="Gough J."/>
            <person name="Frith M.C."/>
            <person name="Maeda N."/>
            <person name="Oyama R."/>
            <person name="Ravasi T."/>
            <person name="Lenhard B."/>
            <person name="Wells C."/>
            <person name="Kodzius R."/>
            <person name="Shimokawa K."/>
            <person name="Bajic V.B."/>
            <person name="Brenner S.E."/>
            <person name="Batalov S."/>
            <person name="Forrest A.R."/>
            <person name="Zavolan M."/>
            <person name="Davis M.J."/>
            <person name="Wilming L.G."/>
            <person name="Aidinis V."/>
            <person name="Allen J.E."/>
            <person name="Ambesi-Impiombato A."/>
            <person name="Apweiler R."/>
            <person name="Aturaliya R.N."/>
            <person name="Bailey T.L."/>
            <person name="Bansal M."/>
            <person name="Baxter L."/>
            <person name="Beisel K.W."/>
            <person name="Bersano T."/>
            <person name="Bono H."/>
            <person name="Chalk A.M."/>
            <person name="Chiu K.P."/>
            <person name="Choudhary V."/>
            <person name="Christoffels A."/>
            <person name="Clutterbuck D.R."/>
            <person name="Crowe M.L."/>
            <person name="Dalla E."/>
            <person name="Dalrymple B.P."/>
            <person name="de Bono B."/>
            <person name="Della Gatta G."/>
            <person name="di Bernardo D."/>
            <person name="Down T."/>
            <person name="Engstrom P."/>
            <person name="Fagiolini M."/>
            <person name="Faulkner G."/>
            <person name="Fletcher C.F."/>
            <person name="Fukushima T."/>
            <person name="Furuno M."/>
            <person name="Futaki S."/>
            <person name="Gariboldi M."/>
            <person name="Georgii-Hemming P."/>
            <person name="Gingeras T.R."/>
            <person name="Gojobori T."/>
            <person name="Green R.E."/>
            <person name="Gustincich S."/>
            <person name="Harbers M."/>
            <person name="Hayashi Y."/>
            <person name="Hensch T.K."/>
            <person name="Hirokawa N."/>
            <person name="Hill D."/>
            <person name="Huminiecki L."/>
            <person name="Iacono M."/>
            <person name="Ikeo K."/>
            <person name="Iwama A."/>
            <person name="Ishikawa T."/>
            <person name="Jakt M."/>
            <person name="Kanapin A."/>
            <person name="Katoh M."/>
            <person name="Kawasawa Y."/>
            <person name="Kelso J."/>
            <person name="Kitamura H."/>
            <person name="Kitano H."/>
            <person name="Kollias G."/>
            <person name="Krishnan S.P."/>
            <person name="Kruger A."/>
            <person name="Kummerfeld S.K."/>
            <person name="Kurochkin I.V."/>
            <person name="Lareau L.F."/>
            <person name="Lazarevic D."/>
            <person name="Lipovich L."/>
            <person name="Liu J."/>
            <person name="Liuni S."/>
            <person name="McWilliam S."/>
            <person name="Madan Babu M."/>
            <person name="Madera M."/>
            <person name="Marchionni L."/>
            <person name="Matsuda H."/>
            <person name="Matsuzawa S."/>
            <person name="Miki H."/>
            <person name="Mignone F."/>
            <person name="Miyake S."/>
            <person name="Morris K."/>
            <person name="Mottagui-Tabar S."/>
            <person name="Mulder N."/>
            <person name="Nakano N."/>
            <person name="Nakauchi H."/>
            <person name="Ng P."/>
            <person name="Nilsson R."/>
            <person name="Nishiguchi S."/>
            <person name="Nishikawa S."/>
            <person name="Nori F."/>
            <person name="Ohara O."/>
            <person name="Okazaki Y."/>
            <person name="Orlando V."/>
            <person name="Pang K.C."/>
            <person name="Pavan W.J."/>
            <person name="Pavesi G."/>
            <person name="Pesole G."/>
            <person name="Petrovsky N."/>
            <person name="Piazza S."/>
            <person name="Reed J."/>
            <person name="Reid J.F."/>
            <person name="Ring B.Z."/>
            <person name="Ringwald M."/>
            <person name="Rost B."/>
            <person name="Ruan Y."/>
            <person name="Salzberg S.L."/>
            <person name="Sandelin A."/>
            <person name="Schneider C."/>
            <person name="Schoenbach C."/>
            <person name="Sekiguchi K."/>
            <person name="Semple C.A."/>
            <person name="Seno S."/>
            <person name="Sessa L."/>
            <person name="Sheng Y."/>
            <person name="Shibata Y."/>
            <person name="Shimada H."/>
            <person name="Shimada K."/>
            <person name="Silva D."/>
            <person name="Sinclair B."/>
            <person name="Sperling S."/>
            <person name="Stupka E."/>
            <person name="Sugiura K."/>
            <person name="Sultana R."/>
            <person name="Takenaka Y."/>
            <person name="Taki K."/>
            <person name="Tammoja K."/>
            <person name="Tan S.L."/>
            <person name="Tang S."/>
            <person name="Taylor M.S."/>
            <person name="Tegner J."/>
            <person name="Teichmann S.A."/>
            <person name="Ueda H.R."/>
            <person name="van Nimwegen E."/>
            <person name="Verardo R."/>
            <person name="Wei C.L."/>
            <person name="Yagi K."/>
            <person name="Yamanishi H."/>
            <person name="Zabarovsky E."/>
            <person name="Zhu S."/>
            <person name="Zimmer A."/>
            <person name="Hide W."/>
            <person name="Bult C."/>
            <person name="Grimmond S.M."/>
            <person name="Teasdale R.D."/>
            <person name="Liu E.T."/>
            <person name="Brusic V."/>
            <person name="Quackenbush J."/>
            <person name="Wahlestedt C."/>
            <person name="Mattick J.S."/>
            <person name="Hume D.A."/>
            <person name="Kai C."/>
            <person name="Sasaki D."/>
            <person name="Tomaru Y."/>
            <person name="Fukuda S."/>
            <person name="Kanamori-Katayama M."/>
            <person name="Suzuki M."/>
            <person name="Aoki J."/>
            <person name="Arakawa T."/>
            <person name="Iida J."/>
            <person name="Imamura K."/>
            <person name="Itoh M."/>
            <person name="Kato T."/>
            <person name="Kawaji H."/>
            <person name="Kawagashira N."/>
            <person name="Kawashima T."/>
            <person name="Kojima M."/>
            <person name="Kondo S."/>
            <person name="Konno H."/>
            <person name="Nakano K."/>
            <person name="Ninomiya N."/>
            <person name="Nishio T."/>
            <person name="Okada M."/>
            <person name="Plessy C."/>
            <person name="Shibata K."/>
            <person name="Shiraki T."/>
            <person name="Suzuki S."/>
            <person name="Tagami M."/>
            <person name="Waki K."/>
            <person name="Watahiki A."/>
            <person name="Okamura-Oho Y."/>
            <person name="Suzuki H."/>
            <person name="Kawai J."/>
            <person name="Hayashizaki Y."/>
        </authorList>
    </citation>
    <scope>NUCLEOTIDE SEQUENCE [LARGE SCALE MRNA]</scope>
    <source>
        <strain>C57BL/6J</strain>
        <tissue>Testis</tissue>
    </source>
</reference>
<reference key="4">
    <citation type="journal article" date="2004" name="Genome Res.">
        <title>The status, quality, and expansion of the NIH full-length cDNA project: the Mammalian Gene Collection (MGC).</title>
        <authorList>
            <consortium name="The MGC Project Team"/>
        </authorList>
    </citation>
    <scope>NUCLEOTIDE SEQUENCE [LARGE SCALE MRNA]</scope>
    <source>
        <tissue>Testis</tissue>
    </source>
</reference>
<feature type="chain" id="PRO_0000208632" description="F-actin-capping protein subunit alpha-3">
    <location>
        <begin position="1"/>
        <end position="299"/>
    </location>
</feature>
<feature type="modified residue" description="Phosphoserine" evidence="3">
    <location>
        <position position="2"/>
    </location>
</feature>
<feature type="modified residue" description="Phosphoserine" evidence="3">
    <location>
        <position position="290"/>
    </location>
</feature>
<feature type="sequence conflict" description="In Ref. 3; BAB30213." evidence="4" ref="3">
    <original>L</original>
    <variation>I</variation>
    <location>
        <position position="117"/>
    </location>
</feature>
<feature type="sequence conflict" description="In Ref. 3; BAB30213." evidence="4" ref="3">
    <original>F</original>
    <variation>Y</variation>
    <location>
        <position position="225"/>
    </location>
</feature>
<proteinExistence type="evidence at transcript level"/>
<accession>P70190</accession>
<accession>Q9D4N3</accession>
<protein>
    <recommendedName>
        <fullName>F-actin-capping protein subunit alpha-3</fullName>
    </recommendedName>
    <alternativeName>
        <fullName>CapZ alpha-3</fullName>
    </alternativeName>
    <alternativeName>
        <fullName>Germ cell-specific protein 3</fullName>
    </alternativeName>
</protein>
<evidence type="ECO:0000250" key="1"/>
<evidence type="ECO:0000250" key="2">
    <source>
        <dbReference type="UniProtKB" id="A0PFK5"/>
    </source>
</evidence>
<evidence type="ECO:0000250" key="3">
    <source>
        <dbReference type="UniProtKB" id="Q9WUV6"/>
    </source>
</evidence>
<evidence type="ECO:0000305" key="4"/>
<sequence>MSLSVLSRKEKEKVIHRLLVQAPPGEFVNAFDDLCLLIRDEKLMHHQGECAGHQHCQKYCVPLCIDGNPVLLSHHNVMGDFRFFDYQSKLSFRFDLLQNQLRDIQSHGIIRNETEYLRSVVMCALKLYVNDHYPNGNCNVLRKTVKSKEFLIACIEDHSYDNGECWNGLWKSKWIFQVNPFLTQVTGRIFVQAHFFRCVNLHIEVSKDLKESLEVVNQAQLALSFARLVEEQENKFQAAVIEELQELSNEALRKILRRDLPVTRTLIDWQRILSDLNLVMYPKLGYVIYSRSVLCNWII</sequence>
<gene>
    <name type="primary">Capza3</name>
    <name type="synonym">Cappa3</name>
    <name type="synonym">Gsg3</name>
</gene>
<dbReference type="EMBL" id="D87471">
    <property type="protein sequence ID" value="BAA13409.1"/>
    <property type="molecule type" value="mRNA"/>
</dbReference>
<dbReference type="EMBL" id="AB026984">
    <property type="protein sequence ID" value="BAA81887.1"/>
    <property type="molecule type" value="Genomic_DNA"/>
</dbReference>
<dbReference type="EMBL" id="AK016391">
    <property type="protein sequence ID" value="BAB30213.1"/>
    <property type="molecule type" value="mRNA"/>
</dbReference>
<dbReference type="EMBL" id="BC049620">
    <property type="protein sequence ID" value="AAH49620.1"/>
    <property type="molecule type" value="mRNA"/>
</dbReference>
<dbReference type="CCDS" id="CCDS20672.1"/>
<dbReference type="RefSeq" id="NP_031631.3">
    <property type="nucleotide sequence ID" value="NM_007605.4"/>
</dbReference>
<dbReference type="SMR" id="P70190"/>
<dbReference type="FunCoup" id="P70190">
    <property type="interactions" value="252"/>
</dbReference>
<dbReference type="STRING" id="10090.ENSMUSP00000038562"/>
<dbReference type="GlyGen" id="P70190">
    <property type="glycosylation" value="1 site, 1 N-linked glycan (1 site)"/>
</dbReference>
<dbReference type="PhosphoSitePlus" id="P70190"/>
<dbReference type="jPOST" id="P70190"/>
<dbReference type="PaxDb" id="10090-ENSMUSP00000038562"/>
<dbReference type="ProteomicsDB" id="265677"/>
<dbReference type="Antibodypedia" id="23887">
    <property type="antibodies" value="101 antibodies from 23 providers"/>
</dbReference>
<dbReference type="DNASU" id="12344"/>
<dbReference type="Ensembl" id="ENSMUST00000043797.6">
    <property type="protein sequence ID" value="ENSMUSP00000038562.5"/>
    <property type="gene ID" value="ENSMUSG00000041791.7"/>
</dbReference>
<dbReference type="GeneID" id="12344"/>
<dbReference type="KEGG" id="mmu:12344"/>
<dbReference type="UCSC" id="uc009eoa.2">
    <property type="organism name" value="mouse"/>
</dbReference>
<dbReference type="AGR" id="MGI:106221"/>
<dbReference type="CTD" id="93661"/>
<dbReference type="MGI" id="MGI:106221">
    <property type="gene designation" value="Capza3"/>
</dbReference>
<dbReference type="VEuPathDB" id="HostDB:ENSMUSG00000041791"/>
<dbReference type="eggNOG" id="KOG0836">
    <property type="taxonomic scope" value="Eukaryota"/>
</dbReference>
<dbReference type="GeneTree" id="ENSGT00950000183119"/>
<dbReference type="HOGENOM" id="CLU_045161_0_0_1"/>
<dbReference type="InParanoid" id="P70190"/>
<dbReference type="OMA" id="HFPAGNC"/>
<dbReference type="OrthoDB" id="340550at2759"/>
<dbReference type="PhylomeDB" id="P70190"/>
<dbReference type="TreeFam" id="TF314822"/>
<dbReference type="Reactome" id="R-MMU-2132295">
    <property type="pathway name" value="MHC class II antigen presentation"/>
</dbReference>
<dbReference type="Reactome" id="R-MMU-3371497">
    <property type="pathway name" value="HSP90 chaperone cycle for steroid hormone receptors (SHR) in the presence of ligand"/>
</dbReference>
<dbReference type="Reactome" id="R-MMU-6807878">
    <property type="pathway name" value="COPI-mediated anterograde transport"/>
</dbReference>
<dbReference type="Reactome" id="R-MMU-6811436">
    <property type="pathway name" value="COPI-independent Golgi-to-ER retrograde traffic"/>
</dbReference>
<dbReference type="BioGRID-ORCS" id="12344">
    <property type="hits" value="1 hit in 77 CRISPR screens"/>
</dbReference>
<dbReference type="PRO" id="PR:P70190"/>
<dbReference type="Proteomes" id="UP000000589">
    <property type="component" value="Chromosome 6"/>
</dbReference>
<dbReference type="RNAct" id="P70190">
    <property type="molecule type" value="protein"/>
</dbReference>
<dbReference type="Bgee" id="ENSMUSG00000041791">
    <property type="expression patterns" value="Expressed in seminiferous tubule of testis and 5 other cell types or tissues"/>
</dbReference>
<dbReference type="GO" id="GO:0030863">
    <property type="term" value="C:cortical cytoskeleton"/>
    <property type="evidence" value="ECO:0000314"/>
    <property type="project" value="MGI"/>
</dbReference>
<dbReference type="GO" id="GO:0008290">
    <property type="term" value="C:F-actin capping protein complex"/>
    <property type="evidence" value="ECO:0007669"/>
    <property type="project" value="InterPro"/>
</dbReference>
<dbReference type="GO" id="GO:0016020">
    <property type="term" value="C:membrane"/>
    <property type="evidence" value="ECO:0000314"/>
    <property type="project" value="MGI"/>
</dbReference>
<dbReference type="GO" id="GO:0061827">
    <property type="term" value="C:sperm head"/>
    <property type="evidence" value="ECO:0000314"/>
    <property type="project" value="MGI"/>
</dbReference>
<dbReference type="GO" id="GO:0003779">
    <property type="term" value="F:actin binding"/>
    <property type="evidence" value="ECO:0007669"/>
    <property type="project" value="UniProtKB-KW"/>
</dbReference>
<dbReference type="GO" id="GO:0007015">
    <property type="term" value="P:actin filament organization"/>
    <property type="evidence" value="ECO:0000315"/>
    <property type="project" value="MGI"/>
</dbReference>
<dbReference type="GO" id="GO:0051016">
    <property type="term" value="P:barbed-end actin filament capping"/>
    <property type="evidence" value="ECO:0007669"/>
    <property type="project" value="InterPro"/>
</dbReference>
<dbReference type="GO" id="GO:0007028">
    <property type="term" value="P:cytoplasm organization"/>
    <property type="evidence" value="ECO:0000315"/>
    <property type="project" value="MGI"/>
</dbReference>
<dbReference type="GO" id="GO:0007286">
    <property type="term" value="P:spermatid development"/>
    <property type="evidence" value="ECO:0000315"/>
    <property type="project" value="MGI"/>
</dbReference>
<dbReference type="FunFam" id="3.30.1140.60:FF:000002">
    <property type="entry name" value="F-actin-capping protein subunit alpha"/>
    <property type="match status" value="1"/>
</dbReference>
<dbReference type="FunFam" id="3.90.1150.210:FF:000003">
    <property type="entry name" value="F-actin-capping protein subunit alpha"/>
    <property type="match status" value="1"/>
</dbReference>
<dbReference type="Gene3D" id="3.30.1140.60">
    <property type="entry name" value="F-actin capping protein, alpha subunit"/>
    <property type="match status" value="1"/>
</dbReference>
<dbReference type="Gene3D" id="3.90.1150.210">
    <property type="entry name" value="F-actin capping protein, beta subunit"/>
    <property type="match status" value="1"/>
</dbReference>
<dbReference type="InterPro" id="IPR002189">
    <property type="entry name" value="CapZ_alpha"/>
</dbReference>
<dbReference type="InterPro" id="IPR037282">
    <property type="entry name" value="CapZ_alpha/beta"/>
</dbReference>
<dbReference type="InterPro" id="IPR042276">
    <property type="entry name" value="CapZ_alpha/beta_2"/>
</dbReference>
<dbReference type="InterPro" id="IPR042489">
    <property type="entry name" value="CapZ_alpha_1"/>
</dbReference>
<dbReference type="InterPro" id="IPR017865">
    <property type="entry name" value="F-actin_cap_asu_CS"/>
</dbReference>
<dbReference type="PANTHER" id="PTHR10653">
    <property type="entry name" value="F-ACTIN-CAPPING PROTEIN SUBUNIT ALPHA"/>
    <property type="match status" value="1"/>
</dbReference>
<dbReference type="PANTHER" id="PTHR10653:SF6">
    <property type="entry name" value="F-ACTIN-CAPPING PROTEIN SUBUNIT ALPHA-3"/>
    <property type="match status" value="1"/>
</dbReference>
<dbReference type="Pfam" id="PF01267">
    <property type="entry name" value="F-actin_cap_A"/>
    <property type="match status" value="1"/>
</dbReference>
<dbReference type="PRINTS" id="PR00191">
    <property type="entry name" value="FACTINCAPA"/>
</dbReference>
<dbReference type="SUPFAM" id="SSF90096">
    <property type="entry name" value="Subunits of heterodimeric actin filament capping protein Capz"/>
    <property type="match status" value="1"/>
</dbReference>
<dbReference type="PROSITE" id="PS00748">
    <property type="entry name" value="F_ACTIN_CAPPING_A_1"/>
    <property type="match status" value="1"/>
</dbReference>
<dbReference type="PROSITE" id="PS00749">
    <property type="entry name" value="F_ACTIN_CAPPING_A_2"/>
    <property type="match status" value="1"/>
</dbReference>
<organism>
    <name type="scientific">Mus musculus</name>
    <name type="common">Mouse</name>
    <dbReference type="NCBI Taxonomy" id="10090"/>
    <lineage>
        <taxon>Eukaryota</taxon>
        <taxon>Metazoa</taxon>
        <taxon>Chordata</taxon>
        <taxon>Craniata</taxon>
        <taxon>Vertebrata</taxon>
        <taxon>Euteleostomi</taxon>
        <taxon>Mammalia</taxon>
        <taxon>Eutheria</taxon>
        <taxon>Euarchontoglires</taxon>
        <taxon>Glires</taxon>
        <taxon>Rodentia</taxon>
        <taxon>Myomorpha</taxon>
        <taxon>Muroidea</taxon>
        <taxon>Muridae</taxon>
        <taxon>Murinae</taxon>
        <taxon>Mus</taxon>
        <taxon>Mus</taxon>
    </lineage>
</organism>